<sequence length="713" mass="72511">MFGRFLLAIVILQLARTACTQEADDGKCKTCGVTIGQDTWCSECNGANYAPVNGQCVDVNAEGPSKTLCPQHSAGKCTQCGGNSFMYKDGCYSSGEGLPGHSLCLSSDGDGVCTEAAPGYFAPVGAANTEQSVIACGDTTGVTIAAGGNTYKGIADCAECSAPDATAGAEAGKVATCTKCGVSKYLKDNVCVDKAQCNSGSTNKFVAVDDSENGNKCVSCSDNLNGGVANCDTCSYDEQSKKIKCTKCTDNNYLKTTSEGTSCVQKDQCKDGFFPKDDSSAGNKCLPCNDSTDGIANCATCALVSGRSGAALVTCSACTDGYKPSADKTTCEAVSNCKTPGCKACSNEGKENEVCTDCDGSTYLTPTSQCIDSCAKIGNYYGATEGAKKLCKECTAANCKTCDDQGQCQACNDGFYKNGDACSPCHESCKTCSAGTASDCTECPTGKALRYGDDGTKGTCGEGCTTGTGAGACKTCGLTIDGASYCSECATTTEYPQNGVCAPKASRATPTCNDSPIQNGVCGTCADNYFKMNGGCYETVKYPGKTVCISAPNGGTCQKAADGYKLDSGTLTVCSEGCKECASSTDCTTCLDGYVKSASACTKCDASCETCNGAATTCKACATGYYKTASGEGACTSCESDSNGVTGIKGCLNCAPPPNNKGSVLCYLIKDSGSTNKSGLSTGAIAGISVAVIVVVGGLIGFLCWWFLCRGKA</sequence>
<proteinExistence type="evidence at transcript level"/>
<accession>P21849</accession>
<comment type="subcellular location">
    <subcellularLocation>
        <location>Cell membrane</location>
        <topology>Single-pass type I membrane protein</topology>
    </subcellularLocation>
</comment>
<comment type="domain">
    <text>Contains 29 repeats of the CXXC motif.</text>
</comment>
<comment type="similarity">
    <text evidence="2">Belongs to the Giardia variant surface protein family.</text>
</comment>
<gene>
    <name type="primary">TSA 417</name>
</gene>
<keyword id="KW-1003">Cell membrane</keyword>
<keyword id="KW-0325">Glycoprotein</keyword>
<keyword id="KW-0472">Membrane</keyword>
<keyword id="KW-0677">Repeat</keyword>
<keyword id="KW-0732">Signal</keyword>
<keyword id="KW-0812">Transmembrane</keyword>
<keyword id="KW-1133">Transmembrane helix</keyword>
<evidence type="ECO:0000255" key="1"/>
<evidence type="ECO:0000305" key="2"/>
<dbReference type="EMBL" id="M33641">
    <property type="protein sequence ID" value="AAA02688.1"/>
    <property type="molecule type" value="mRNA"/>
</dbReference>
<dbReference type="EMBL" id="M97488">
    <property type="protein sequence ID" value="AAA02581.1"/>
    <property type="molecule type" value="Genomic_DNA"/>
</dbReference>
<dbReference type="PIR" id="A35502">
    <property type="entry name" value="A35502"/>
</dbReference>
<dbReference type="PIR" id="PC1294">
    <property type="entry name" value="PC1294"/>
</dbReference>
<dbReference type="SMR" id="P21849"/>
<dbReference type="GlyCosmos" id="P21849">
    <property type="glycosylation" value="2 sites, No reported glycans"/>
</dbReference>
<dbReference type="KEGG" id="gla:GL50803_00113797"/>
<dbReference type="VEuPathDB" id="GiardiaDB:DHA2_151647"/>
<dbReference type="VEuPathDB" id="GiardiaDB:GL50581_2080"/>
<dbReference type="VEuPathDB" id="GiardiaDB:GL50581_3480"/>
<dbReference type="VEuPathDB" id="GiardiaDB:GL50803_00113797"/>
<dbReference type="VEuPathDB" id="GiardiaDB:QR46_2886"/>
<dbReference type="VEuPathDB" id="GiardiaDB:QR46_3301"/>
<dbReference type="OrthoDB" id="18487at2759"/>
<dbReference type="GO" id="GO:0005886">
    <property type="term" value="C:plasma membrane"/>
    <property type="evidence" value="ECO:0007669"/>
    <property type="project" value="UniProtKB-SubCell"/>
</dbReference>
<dbReference type="CDD" id="cd00064">
    <property type="entry name" value="FU"/>
    <property type="match status" value="1"/>
</dbReference>
<dbReference type="Gene3D" id="2.10.220.10">
    <property type="entry name" value="Hormone Receptor, Insulin-like Growth Factor Receptor 1, Chain A, domain 2"/>
    <property type="match status" value="1"/>
</dbReference>
<dbReference type="InterPro" id="IPR000742">
    <property type="entry name" value="EGF-like_dom"/>
</dbReference>
<dbReference type="InterPro" id="IPR006212">
    <property type="entry name" value="Furin_repeat"/>
</dbReference>
<dbReference type="InterPro" id="IPR052798">
    <property type="entry name" value="Giardia_VSA"/>
</dbReference>
<dbReference type="InterPro" id="IPR005127">
    <property type="entry name" value="Giardia_VSP"/>
</dbReference>
<dbReference type="InterPro" id="IPR009030">
    <property type="entry name" value="Growth_fac_rcpt_cys_sf"/>
</dbReference>
<dbReference type="PANTHER" id="PTHR23275">
    <property type="entry name" value="CABRIOLET.-RELATED"/>
    <property type="match status" value="1"/>
</dbReference>
<dbReference type="PANTHER" id="PTHR23275:SF100">
    <property type="entry name" value="EGF-LIKE DOMAIN-CONTAINING PROTEIN"/>
    <property type="match status" value="1"/>
</dbReference>
<dbReference type="Pfam" id="PF03302">
    <property type="entry name" value="VSP"/>
    <property type="match status" value="2"/>
</dbReference>
<dbReference type="SMART" id="SM00181">
    <property type="entry name" value="EGF"/>
    <property type="match status" value="4"/>
</dbReference>
<dbReference type="SMART" id="SM00261">
    <property type="entry name" value="FU"/>
    <property type="match status" value="6"/>
</dbReference>
<dbReference type="SUPFAM" id="SSF57184">
    <property type="entry name" value="Growth factor receptor domain"/>
    <property type="match status" value="3"/>
</dbReference>
<name>TSA4_GIAIN</name>
<organism>
    <name type="scientific">Giardia intestinalis</name>
    <name type="common">Giardia lamblia</name>
    <dbReference type="NCBI Taxonomy" id="5741"/>
    <lineage>
        <taxon>Eukaryota</taxon>
        <taxon>Metamonada</taxon>
        <taxon>Diplomonadida</taxon>
        <taxon>Hexamitidae</taxon>
        <taxon>Giardiinae</taxon>
        <taxon>Giardia</taxon>
    </lineage>
</organism>
<feature type="signal peptide">
    <location>
        <begin position="1"/>
        <end position="17"/>
    </location>
</feature>
<feature type="chain" id="PRO_0000036459" description="Major surface-labeled trophozoite antigen 417">
    <location>
        <begin position="18"/>
        <end position="713"/>
    </location>
</feature>
<feature type="topological domain" description="Extracellular" evidence="1">
    <location>
        <begin position="18"/>
        <end position="679"/>
    </location>
</feature>
<feature type="transmembrane region" description="Helical" evidence="1">
    <location>
        <begin position="680"/>
        <end position="708"/>
    </location>
</feature>
<feature type="topological domain" description="Cytoplasmic" evidence="1">
    <location>
        <begin position="709"/>
        <end position="713"/>
    </location>
</feature>
<feature type="glycosylation site" description="N-linked (GlcNAc...) asparagine" evidence="1">
    <location>
        <position position="289"/>
    </location>
</feature>
<feature type="glycosylation site" description="N-linked (GlcNAc...) asparagine" evidence="1">
    <location>
        <position position="676"/>
    </location>
</feature>
<feature type="sequence variant" description="In strain: Adelaide-1.">
    <original>A</original>
    <variation>T</variation>
    <location>
        <position position="582"/>
    </location>
</feature>
<feature type="sequence variant" description="In strain: Adelaide-1.">
    <original>A</original>
    <variation>S</variation>
    <location>
        <position position="606"/>
    </location>
</feature>
<protein>
    <recommendedName>
        <fullName>Major surface-labeled trophozoite antigen 417</fullName>
    </recommendedName>
</protein>
<reference key="1">
    <citation type="journal article" date="1990" name="Proc. Natl. Acad. Sci. U.S.A.">
        <title>Isolation and expression of the gene for a major surface protein of Giardia lamblia.</title>
        <authorList>
            <person name="Gillin F.D."/>
            <person name="Hagblom P."/>
            <person name="Harwood J."/>
            <person name="Aley S.B."/>
            <person name="Reiner D.S."/>
            <person name="McCaffery M."/>
            <person name="So M."/>
            <person name="Guiney D.G."/>
        </authorList>
    </citation>
    <scope>NUCLEOTIDE SEQUENCE [MRNA]</scope>
    <source>
        <strain>ATCC 30957 / WB</strain>
    </source>
</reference>
<reference key="2">
    <citation type="journal article" date="1993" name="Gene">
        <title>Two genes encoding homologous 70-kDa surface proteins are present within individual trophozoites of the binucleate protozoan parasite Giardia intestinalis.</title>
        <authorList>
            <person name="Ey P.L."/>
            <person name="Mayrhofer G."/>
        </authorList>
    </citation>
    <scope>NUCLEOTIDE SEQUENCE [MRNA] OF 480-620</scope>
    <source>
        <strain>Adelaide-1</strain>
    </source>
</reference>